<organism>
    <name type="scientific">Bos taurus</name>
    <name type="common">Bovine</name>
    <dbReference type="NCBI Taxonomy" id="9913"/>
    <lineage>
        <taxon>Eukaryota</taxon>
        <taxon>Metazoa</taxon>
        <taxon>Chordata</taxon>
        <taxon>Craniata</taxon>
        <taxon>Vertebrata</taxon>
        <taxon>Euteleostomi</taxon>
        <taxon>Mammalia</taxon>
        <taxon>Eutheria</taxon>
        <taxon>Laurasiatheria</taxon>
        <taxon>Artiodactyla</taxon>
        <taxon>Ruminantia</taxon>
        <taxon>Pecora</taxon>
        <taxon>Bovidae</taxon>
        <taxon>Bovinae</taxon>
        <taxon>Bos</taxon>
    </lineage>
</organism>
<evidence type="ECO:0000250" key="1">
    <source>
        <dbReference type="UniProtKB" id="Q7Z7A3"/>
    </source>
</evidence>
<evidence type="ECO:0000255" key="2">
    <source>
        <dbReference type="HAMAP-Rule" id="MF_03053"/>
    </source>
</evidence>
<evidence type="ECO:0000256" key="3">
    <source>
        <dbReference type="SAM" id="MobiDB-lite"/>
    </source>
</evidence>
<dbReference type="EC" id="2.7.7.-" evidence="2"/>
<dbReference type="EMBL" id="BC120329">
    <property type="protein sequence ID" value="AAI20330.1"/>
    <property type="molecule type" value="mRNA"/>
</dbReference>
<dbReference type="RefSeq" id="NP_001071422.1">
    <property type="nucleotide sequence ID" value="NM_001077954.1"/>
</dbReference>
<dbReference type="SMR" id="Q0VC66"/>
<dbReference type="FunCoup" id="Q0VC66">
    <property type="interactions" value="2026"/>
</dbReference>
<dbReference type="STRING" id="9913.ENSBTAP00000050053"/>
<dbReference type="PaxDb" id="9913-ENSBTAP00000050053"/>
<dbReference type="Ensembl" id="ENSBTAT00000055031.4">
    <property type="protein sequence ID" value="ENSBTAP00000050053.2"/>
    <property type="gene ID" value="ENSBTAG00000039212.4"/>
</dbReference>
<dbReference type="GeneID" id="522824"/>
<dbReference type="KEGG" id="bta:522824"/>
<dbReference type="CTD" id="90353"/>
<dbReference type="VEuPathDB" id="HostDB:ENSBTAG00000039212"/>
<dbReference type="eggNOG" id="KOG2840">
    <property type="taxonomic scope" value="Eukaryota"/>
</dbReference>
<dbReference type="GeneTree" id="ENSGT00390000001041"/>
<dbReference type="HOGENOM" id="CLU_026481_1_0_1"/>
<dbReference type="InParanoid" id="Q0VC66"/>
<dbReference type="OMA" id="MGKCERC"/>
<dbReference type="OrthoDB" id="198857at2759"/>
<dbReference type="TreeFam" id="TF352405"/>
<dbReference type="UniPathway" id="UPA00988"/>
<dbReference type="Proteomes" id="UP000009136">
    <property type="component" value="Chromosome 18"/>
</dbReference>
<dbReference type="Bgee" id="ENSBTAG00000039212">
    <property type="expression patterns" value="Expressed in rumen papilla and 102 other cell types or tissues"/>
</dbReference>
<dbReference type="GO" id="GO:0005829">
    <property type="term" value="C:cytosol"/>
    <property type="evidence" value="ECO:0000250"/>
    <property type="project" value="UniProtKB"/>
</dbReference>
<dbReference type="GO" id="GO:0002144">
    <property type="term" value="C:cytosolic tRNA wobble base thiouridylase complex"/>
    <property type="evidence" value="ECO:0000318"/>
    <property type="project" value="GO_Central"/>
</dbReference>
<dbReference type="GO" id="GO:0016779">
    <property type="term" value="F:nucleotidyltransferase activity"/>
    <property type="evidence" value="ECO:0007669"/>
    <property type="project" value="UniProtKB-UniRule"/>
</dbReference>
<dbReference type="GO" id="GO:0000049">
    <property type="term" value="F:tRNA binding"/>
    <property type="evidence" value="ECO:0000250"/>
    <property type="project" value="UniProtKB"/>
</dbReference>
<dbReference type="GO" id="GO:0032447">
    <property type="term" value="P:protein urmylation"/>
    <property type="evidence" value="ECO:0007669"/>
    <property type="project" value="UniProtKB-UniRule"/>
</dbReference>
<dbReference type="GO" id="GO:0034227">
    <property type="term" value="P:tRNA thio-modification"/>
    <property type="evidence" value="ECO:0000250"/>
    <property type="project" value="UniProtKB"/>
</dbReference>
<dbReference type="GO" id="GO:0002143">
    <property type="term" value="P:tRNA wobble position uridine thiolation"/>
    <property type="evidence" value="ECO:0000318"/>
    <property type="project" value="GO_Central"/>
</dbReference>
<dbReference type="GO" id="GO:0002098">
    <property type="term" value="P:tRNA wobble uridine modification"/>
    <property type="evidence" value="ECO:0000250"/>
    <property type="project" value="UniProtKB"/>
</dbReference>
<dbReference type="CDD" id="cd01713">
    <property type="entry name" value="CTU1-like"/>
    <property type="match status" value="1"/>
</dbReference>
<dbReference type="FunFam" id="3.40.50.620:FF:000132">
    <property type="entry name" value="Cytoplasmic tRNA 2-thiolation protein 1"/>
    <property type="match status" value="1"/>
</dbReference>
<dbReference type="Gene3D" id="3.40.50.620">
    <property type="entry name" value="HUPs"/>
    <property type="match status" value="1"/>
</dbReference>
<dbReference type="HAMAP" id="MF_03053">
    <property type="entry name" value="CTU1"/>
    <property type="match status" value="1"/>
</dbReference>
<dbReference type="InterPro" id="IPR056369">
    <property type="entry name" value="CTU1-like_ATP-bd"/>
</dbReference>
<dbReference type="InterPro" id="IPR032442">
    <property type="entry name" value="CTU1_C"/>
</dbReference>
<dbReference type="InterPro" id="IPR000541">
    <property type="entry name" value="Ncs6/Tuc1/Ctu1"/>
</dbReference>
<dbReference type="InterPro" id="IPR014729">
    <property type="entry name" value="Rossmann-like_a/b/a_fold"/>
</dbReference>
<dbReference type="InterPro" id="IPR011063">
    <property type="entry name" value="TilS/TtcA_N"/>
</dbReference>
<dbReference type="InterPro" id="IPR035107">
    <property type="entry name" value="tRNA_thiolation_TtcA_Ctu1"/>
</dbReference>
<dbReference type="PANTHER" id="PTHR11807">
    <property type="entry name" value="ATPASES OF THE PP SUPERFAMILY-RELATED"/>
    <property type="match status" value="1"/>
</dbReference>
<dbReference type="PANTHER" id="PTHR11807:SF12">
    <property type="entry name" value="CYTOPLASMIC TRNA 2-THIOLATION PROTEIN 1"/>
    <property type="match status" value="1"/>
</dbReference>
<dbReference type="Pfam" id="PF01171">
    <property type="entry name" value="ATP_bind_3"/>
    <property type="match status" value="1"/>
</dbReference>
<dbReference type="Pfam" id="PF16503">
    <property type="entry name" value="zn-ribbon_14"/>
    <property type="match status" value="1"/>
</dbReference>
<dbReference type="PIRSF" id="PIRSF004976">
    <property type="entry name" value="ATPase_YdaO"/>
    <property type="match status" value="1"/>
</dbReference>
<dbReference type="SUPFAM" id="SSF52402">
    <property type="entry name" value="Adenine nucleotide alpha hydrolases-like"/>
    <property type="match status" value="1"/>
</dbReference>
<keyword id="KW-0963">Cytoplasm</keyword>
<keyword id="KW-0597">Phosphoprotein</keyword>
<keyword id="KW-1185">Reference proteome</keyword>
<keyword id="KW-0694">RNA-binding</keyword>
<keyword id="KW-0808">Transferase</keyword>
<keyword id="KW-0819">tRNA processing</keyword>
<keyword id="KW-0820">tRNA-binding</keyword>
<sequence>MPAPQCASCHKARAALRRPRSGQALCGSCFCAAFEAEVLHTVVAGRLLPPGAVVAVGASGGKDSTVLAHVLRELAPRLGISLHLVAVDEGIGGYRDAALAAVRRQAARWELPLTVVAYADLFGGWTMDAVARSTAGSGRSRACCTFCGVLRRRALEEGARLVGATHVVTGHNADDMAETVLMNFLRGDAGRLARGGGLGSPGEGGALPRCRPLQLASQKEVVLYAHFRRLDYFSEECVYAPEAFRGHARDLLKMLEAARPSAVLDLVHSAERLALAPTARPPPPGACSRCGALASRALCQACALLDGLNRGRPRLAIGKGRRGLDEEGPPREPQPSRPLTSEPVPDF</sequence>
<feature type="chain" id="PRO_0000282390" description="Cytoplasmic tRNA 2-thiolation protein 1">
    <location>
        <begin position="1"/>
        <end position="347"/>
    </location>
</feature>
<feature type="region of interest" description="Disordered" evidence="3">
    <location>
        <begin position="315"/>
        <end position="347"/>
    </location>
</feature>
<feature type="modified residue" description="Phosphoserine" evidence="1">
    <location>
        <position position="200"/>
    </location>
</feature>
<protein>
    <recommendedName>
        <fullName evidence="2">Cytoplasmic tRNA 2-thiolation protein 1</fullName>
        <ecNumber evidence="2">2.7.7.-</ecNumber>
    </recommendedName>
    <alternativeName>
        <fullName evidence="2">ATP-binding domain-containing protein 3</fullName>
    </alternativeName>
    <alternativeName>
        <fullName evidence="2">Cytoplasmic tRNA adenylyltransferase 1</fullName>
    </alternativeName>
</protein>
<proteinExistence type="evidence at transcript level"/>
<name>CTU1_BOVIN</name>
<accession>Q0VC66</accession>
<reference key="1">
    <citation type="submission" date="2006-08" db="EMBL/GenBank/DDBJ databases">
        <authorList>
            <consortium name="NIH - Mammalian Gene Collection (MGC) project"/>
        </authorList>
    </citation>
    <scope>NUCLEOTIDE SEQUENCE [LARGE SCALE MRNA]</scope>
    <source>
        <strain>Hereford</strain>
        <tissue>Hippocampus</tissue>
    </source>
</reference>
<gene>
    <name evidence="2" type="primary">CTU1</name>
    <name evidence="2" type="synonym">ATPBD3</name>
    <name evidence="2" type="synonym">NCS6</name>
</gene>
<comment type="function">
    <text evidence="2">Plays a central role in 2-thiolation of mcm(5)S(2)U at tRNA wobble positions of tRNA(Lys), tRNA(Glu) and tRNA(Gln). Directly binds tRNAs and probably acts by catalyzing adenylation of tRNAs, an intermediate required for 2-thiolation. It is unclear whether it acts as a sulfurtransferase that transfers sulfur from thiocarboxylated URM1 onto the uridine of tRNAs at wobble position.</text>
</comment>
<comment type="pathway">
    <text evidence="2">tRNA modification; 5-methoxycarbonylmethyl-2-thiouridine-tRNA biosynthesis.</text>
</comment>
<comment type="subunit">
    <text evidence="2">Component of a complex at least composed of URM1, CTU2/NCS2 and CTU1/ATPBD3. May form a heterodimer with CTU2/NCS2.</text>
</comment>
<comment type="subcellular location">
    <subcellularLocation>
        <location evidence="2">Cytoplasm</location>
    </subcellularLocation>
</comment>
<comment type="similarity">
    <text evidence="2">Belongs to the TtcA family. CTU1/NCS6/ATPBD3 subfamily.</text>
</comment>